<name>IF1_MYCBO</name>
<feature type="initiator methionine" description="Removed" evidence="1">
    <location>
        <position position="1"/>
    </location>
</feature>
<feature type="chain" id="PRO_0000095829" description="Translation initiation factor IF-1">
    <location>
        <begin position="2"/>
        <end position="73"/>
    </location>
</feature>
<feature type="domain" description="S1-like" evidence="2">
    <location>
        <begin position="2"/>
        <end position="73"/>
    </location>
</feature>
<gene>
    <name evidence="2" type="primary">infA</name>
    <name type="ordered locus">BQ2027_MB3491C</name>
</gene>
<reference key="1">
    <citation type="journal article" date="1996" name="Gene">
        <title>Overproduction of mycobacterial ribosomal protein S13 induces catalase/peroxidase activity and hypersensitivity to isoniazid in Mycobacterium smegmatis.</title>
        <authorList>
            <person name="Dubnau E."/>
            <person name="Soares S."/>
            <person name="Huang T.J."/>
            <person name="Jacobs W.R. Jr."/>
        </authorList>
    </citation>
    <scope>NUCLEOTIDE SEQUENCE [GENOMIC DNA]</scope>
    <source>
        <strain>BCG</strain>
    </source>
</reference>
<reference key="2">
    <citation type="journal article" date="2003" name="Proc. Natl. Acad. Sci. U.S.A.">
        <title>The complete genome sequence of Mycobacterium bovis.</title>
        <authorList>
            <person name="Garnier T."/>
            <person name="Eiglmeier K."/>
            <person name="Camus J.-C."/>
            <person name="Medina N."/>
            <person name="Mansoor H."/>
            <person name="Pryor M."/>
            <person name="Duthoy S."/>
            <person name="Grondin S."/>
            <person name="Lacroix C."/>
            <person name="Monsempe C."/>
            <person name="Simon S."/>
            <person name="Harris B."/>
            <person name="Atkin R."/>
            <person name="Doggett J."/>
            <person name="Mayes R."/>
            <person name="Keating L."/>
            <person name="Wheeler P.R."/>
            <person name="Parkhill J."/>
            <person name="Barrell B.G."/>
            <person name="Cole S.T."/>
            <person name="Gordon S.V."/>
            <person name="Hewinson R.G."/>
        </authorList>
    </citation>
    <scope>NUCLEOTIDE SEQUENCE [LARGE SCALE GENOMIC DNA]</scope>
    <source>
        <strain>ATCC BAA-935 / AF2122/97</strain>
    </source>
</reference>
<reference key="3">
    <citation type="journal article" date="2017" name="Genome Announc.">
        <title>Updated reference genome sequence and annotation of Mycobacterium bovis AF2122/97.</title>
        <authorList>
            <person name="Malone K.M."/>
            <person name="Farrell D."/>
            <person name="Stuber T.P."/>
            <person name="Schubert O.T."/>
            <person name="Aebersold R."/>
            <person name="Robbe-Austerman S."/>
            <person name="Gordon S.V."/>
        </authorList>
    </citation>
    <scope>NUCLEOTIDE SEQUENCE [LARGE SCALE GENOMIC DNA]</scope>
    <scope>GENOME REANNOTATION</scope>
    <source>
        <strain>ATCC BAA-935 / AF2122/97</strain>
    </source>
</reference>
<organism>
    <name type="scientific">Mycobacterium bovis (strain ATCC BAA-935 / AF2122/97)</name>
    <dbReference type="NCBI Taxonomy" id="233413"/>
    <lineage>
        <taxon>Bacteria</taxon>
        <taxon>Bacillati</taxon>
        <taxon>Actinomycetota</taxon>
        <taxon>Actinomycetes</taxon>
        <taxon>Mycobacteriales</taxon>
        <taxon>Mycobacteriaceae</taxon>
        <taxon>Mycobacterium</taxon>
        <taxon>Mycobacterium tuberculosis complex</taxon>
    </lineage>
</organism>
<sequence length="73" mass="8489">MAKKDGAIEVEGRVVEPLPNAMFRIELENGHKVLAHISGKMRQHYIRILPEDRVVVELSPYDLSRGRIVYRYK</sequence>
<dbReference type="EMBL" id="U15140">
    <property type="protein sequence ID" value="AAB17595.1"/>
    <property type="molecule type" value="Genomic_DNA"/>
</dbReference>
<dbReference type="EMBL" id="LT708304">
    <property type="protein sequence ID" value="SIU02119.1"/>
    <property type="molecule type" value="Genomic_DNA"/>
</dbReference>
<dbReference type="RefSeq" id="NP_857131.1">
    <property type="nucleotide sequence ID" value="NC_002945.3"/>
</dbReference>
<dbReference type="RefSeq" id="WP_003418601.1">
    <property type="nucleotide sequence ID" value="NC_002945.4"/>
</dbReference>
<dbReference type="SMR" id="P0A5H6"/>
<dbReference type="GeneID" id="98799387"/>
<dbReference type="KEGG" id="mbo:BQ2027_MB3491C"/>
<dbReference type="PATRIC" id="fig|233413.5.peg.3828"/>
<dbReference type="PRO" id="PR:P0A5H6"/>
<dbReference type="Proteomes" id="UP000001419">
    <property type="component" value="Chromosome"/>
</dbReference>
<dbReference type="GO" id="GO:0005829">
    <property type="term" value="C:cytosol"/>
    <property type="evidence" value="ECO:0007669"/>
    <property type="project" value="TreeGrafter"/>
</dbReference>
<dbReference type="GO" id="GO:0043022">
    <property type="term" value="F:ribosome binding"/>
    <property type="evidence" value="ECO:0007669"/>
    <property type="project" value="UniProtKB-UniRule"/>
</dbReference>
<dbReference type="GO" id="GO:0019843">
    <property type="term" value="F:rRNA binding"/>
    <property type="evidence" value="ECO:0007669"/>
    <property type="project" value="UniProtKB-UniRule"/>
</dbReference>
<dbReference type="GO" id="GO:0003743">
    <property type="term" value="F:translation initiation factor activity"/>
    <property type="evidence" value="ECO:0007669"/>
    <property type="project" value="UniProtKB-UniRule"/>
</dbReference>
<dbReference type="CDD" id="cd04451">
    <property type="entry name" value="S1_IF1"/>
    <property type="match status" value="1"/>
</dbReference>
<dbReference type="FunFam" id="2.40.50.140:FF:000002">
    <property type="entry name" value="Translation initiation factor IF-1"/>
    <property type="match status" value="1"/>
</dbReference>
<dbReference type="Gene3D" id="2.40.50.140">
    <property type="entry name" value="Nucleic acid-binding proteins"/>
    <property type="match status" value="1"/>
</dbReference>
<dbReference type="HAMAP" id="MF_00075">
    <property type="entry name" value="IF_1"/>
    <property type="match status" value="1"/>
</dbReference>
<dbReference type="InterPro" id="IPR012340">
    <property type="entry name" value="NA-bd_OB-fold"/>
</dbReference>
<dbReference type="InterPro" id="IPR006196">
    <property type="entry name" value="RNA-binding_domain_S1_IF1"/>
</dbReference>
<dbReference type="InterPro" id="IPR004368">
    <property type="entry name" value="TIF_IF1"/>
</dbReference>
<dbReference type="NCBIfam" id="TIGR00008">
    <property type="entry name" value="infA"/>
    <property type="match status" value="1"/>
</dbReference>
<dbReference type="PANTHER" id="PTHR33370">
    <property type="entry name" value="TRANSLATION INITIATION FACTOR IF-1, CHLOROPLASTIC"/>
    <property type="match status" value="1"/>
</dbReference>
<dbReference type="PANTHER" id="PTHR33370:SF1">
    <property type="entry name" value="TRANSLATION INITIATION FACTOR IF-1, CHLOROPLASTIC"/>
    <property type="match status" value="1"/>
</dbReference>
<dbReference type="Pfam" id="PF01176">
    <property type="entry name" value="eIF-1a"/>
    <property type="match status" value="1"/>
</dbReference>
<dbReference type="SUPFAM" id="SSF50249">
    <property type="entry name" value="Nucleic acid-binding proteins"/>
    <property type="match status" value="1"/>
</dbReference>
<dbReference type="PROSITE" id="PS50832">
    <property type="entry name" value="S1_IF1_TYPE"/>
    <property type="match status" value="1"/>
</dbReference>
<evidence type="ECO:0000250" key="1"/>
<evidence type="ECO:0000255" key="2">
    <source>
        <dbReference type="HAMAP-Rule" id="MF_00075"/>
    </source>
</evidence>
<comment type="function">
    <text evidence="2">One of the essential components for the initiation of protein synthesis. Stabilizes the binding of IF-2 and IF-3 on the 30S subunit to which N-formylmethionyl-tRNA(fMet) subsequently binds. Helps modulate mRNA selection, yielding the 30S pre-initiation complex (PIC). Upon addition of the 50S ribosomal subunit IF-1, IF-2 and IF-3 are released leaving the mature 70S translation initiation complex.</text>
</comment>
<comment type="subunit">
    <text evidence="2">Component of the 30S ribosomal translation pre-initiation complex which assembles on the 30S ribosome in the order IF-2 and IF-3, IF-1 and N-formylmethionyl-tRNA(fMet); mRNA recruitment can occur at any time during PIC assembly.</text>
</comment>
<comment type="subcellular location">
    <subcellularLocation>
        <location evidence="2">Cytoplasm</location>
    </subcellularLocation>
</comment>
<comment type="similarity">
    <text evidence="2">Belongs to the IF-1 family.</text>
</comment>
<keyword id="KW-0963">Cytoplasm</keyword>
<keyword id="KW-0396">Initiation factor</keyword>
<keyword id="KW-0648">Protein biosynthesis</keyword>
<keyword id="KW-1185">Reference proteome</keyword>
<keyword id="KW-0694">RNA-binding</keyword>
<keyword id="KW-0699">rRNA-binding</keyword>
<protein>
    <recommendedName>
        <fullName evidence="2">Translation initiation factor IF-1</fullName>
    </recommendedName>
</protein>
<accession>P0A5H6</accession>
<accession>A0A1R3Y4C0</accession>
<accession>P45957</accession>
<accession>X2BND6</accession>
<proteinExistence type="inferred from homology"/>